<sequence>MLIDKLMKNTREIVTLEDAQKLDQKAGVKSYIGIEPSGIPHVATAVMWPRKLAELQDDIKIYVLLADWHAMINNKLHGDLDLIRKGGELLKRSFMAEGLTKAEYLWASQLVSSSNYWEMFIKTAKRSTLKRLTRALPIMGRTEADAEKDFSMYIYPIMQVTDIFYLDVDIAFGGMDQRHAHMLARDIADKMKVKKAVSVHGYLLSSLKGNTRMDNFVKMSKSDPNSAILINDEYKDIERKVNAAFCPPEKVDGNPLAEIMKYVLIPYYGRDIIIEKPSGNVRIENVDQFQNDYISGKIAPTELKKAMIPILDEMIEPARKVAYDMDLSIFS</sequence>
<gene>
    <name evidence="1" type="primary">tyrS</name>
    <name type="ordered locus">TV1019</name>
    <name type="ORF">TVG1042450</name>
</gene>
<protein>
    <recommendedName>
        <fullName evidence="1">Tyrosine--tRNA ligase</fullName>
        <ecNumber evidence="1">6.1.1.1</ecNumber>
    </recommendedName>
    <alternativeName>
        <fullName evidence="1">Tyrosyl-tRNA synthetase</fullName>
        <shortName evidence="1">TyrRS</shortName>
    </alternativeName>
</protein>
<dbReference type="EC" id="6.1.1.1" evidence="1"/>
<dbReference type="EMBL" id="BA000011">
    <property type="protein sequence ID" value="BAB60161.1"/>
    <property type="molecule type" value="Genomic_DNA"/>
</dbReference>
<dbReference type="RefSeq" id="WP_010917247.1">
    <property type="nucleotide sequence ID" value="NC_002689.2"/>
</dbReference>
<dbReference type="SMR" id="Q979Z1"/>
<dbReference type="STRING" id="273116.gene:9381812"/>
<dbReference type="PaxDb" id="273116-14325257"/>
<dbReference type="GeneID" id="1441129"/>
<dbReference type="KEGG" id="tvo:TVG1042450"/>
<dbReference type="eggNOG" id="arCOG01886">
    <property type="taxonomic scope" value="Archaea"/>
</dbReference>
<dbReference type="HOGENOM" id="CLU_035267_1_1_2"/>
<dbReference type="OrthoDB" id="8389at2157"/>
<dbReference type="PhylomeDB" id="Q979Z1"/>
<dbReference type="Proteomes" id="UP000001017">
    <property type="component" value="Chromosome"/>
</dbReference>
<dbReference type="GO" id="GO:0005737">
    <property type="term" value="C:cytoplasm"/>
    <property type="evidence" value="ECO:0007669"/>
    <property type="project" value="UniProtKB-SubCell"/>
</dbReference>
<dbReference type="GO" id="GO:0005524">
    <property type="term" value="F:ATP binding"/>
    <property type="evidence" value="ECO:0007669"/>
    <property type="project" value="UniProtKB-UniRule"/>
</dbReference>
<dbReference type="GO" id="GO:0004831">
    <property type="term" value="F:tyrosine-tRNA ligase activity"/>
    <property type="evidence" value="ECO:0007669"/>
    <property type="project" value="UniProtKB-UniRule"/>
</dbReference>
<dbReference type="GO" id="GO:0006437">
    <property type="term" value="P:tyrosyl-tRNA aminoacylation"/>
    <property type="evidence" value="ECO:0007669"/>
    <property type="project" value="UniProtKB-UniRule"/>
</dbReference>
<dbReference type="Gene3D" id="3.40.50.620">
    <property type="entry name" value="HUPs"/>
    <property type="match status" value="1"/>
</dbReference>
<dbReference type="Gene3D" id="1.10.240.10">
    <property type="entry name" value="Tyrosyl-Transfer RNA Synthetase"/>
    <property type="match status" value="1"/>
</dbReference>
<dbReference type="HAMAP" id="MF_02009">
    <property type="entry name" value="Tyr_tRNA_synth_type4"/>
    <property type="match status" value="1"/>
</dbReference>
<dbReference type="InterPro" id="IPR002305">
    <property type="entry name" value="aa-tRNA-synth_Ic"/>
</dbReference>
<dbReference type="InterPro" id="IPR014729">
    <property type="entry name" value="Rossmann-like_a/b/a_fold"/>
</dbReference>
<dbReference type="InterPro" id="IPR023678">
    <property type="entry name" value="Tyr-tRNA-ligase_4"/>
</dbReference>
<dbReference type="InterPro" id="IPR023617">
    <property type="entry name" value="Tyr-tRNA-ligase_arc/euk-type"/>
</dbReference>
<dbReference type="InterPro" id="IPR050489">
    <property type="entry name" value="Tyr-tRNA_synthase"/>
</dbReference>
<dbReference type="NCBIfam" id="NF006330">
    <property type="entry name" value="PRK08560.1"/>
    <property type="match status" value="1"/>
</dbReference>
<dbReference type="PANTHER" id="PTHR46264:SF4">
    <property type="entry name" value="TYROSINE--TRNA LIGASE, CYTOPLASMIC"/>
    <property type="match status" value="1"/>
</dbReference>
<dbReference type="PANTHER" id="PTHR46264">
    <property type="entry name" value="TYROSINE-TRNA LIGASE"/>
    <property type="match status" value="1"/>
</dbReference>
<dbReference type="Pfam" id="PF00579">
    <property type="entry name" value="tRNA-synt_1b"/>
    <property type="match status" value="1"/>
</dbReference>
<dbReference type="PIRSF" id="PIRSF006588">
    <property type="entry name" value="TyrRS_arch_euk"/>
    <property type="match status" value="1"/>
</dbReference>
<dbReference type="SUPFAM" id="SSF52374">
    <property type="entry name" value="Nucleotidylyl transferase"/>
    <property type="match status" value="1"/>
</dbReference>
<feature type="chain" id="PRO_0000240274" description="Tyrosine--tRNA ligase">
    <location>
        <begin position="1"/>
        <end position="331"/>
    </location>
</feature>
<feature type="short sequence motif" description="'KMSKS' region">
    <location>
        <begin position="218"/>
        <end position="222"/>
    </location>
</feature>
<feature type="binding site" evidence="1">
    <location>
        <position position="31"/>
    </location>
    <ligand>
        <name>L-tyrosine</name>
        <dbReference type="ChEBI" id="CHEBI:58315"/>
    </ligand>
</feature>
<feature type="binding site" evidence="1">
    <location>
        <position position="155"/>
    </location>
    <ligand>
        <name>L-tyrosine</name>
        <dbReference type="ChEBI" id="CHEBI:58315"/>
    </ligand>
</feature>
<feature type="binding site" evidence="1">
    <location>
        <position position="159"/>
    </location>
    <ligand>
        <name>L-tyrosine</name>
        <dbReference type="ChEBI" id="CHEBI:58315"/>
    </ligand>
</feature>
<feature type="binding site" evidence="1">
    <location>
        <position position="162"/>
    </location>
    <ligand>
        <name>L-tyrosine</name>
        <dbReference type="ChEBI" id="CHEBI:58315"/>
    </ligand>
</feature>
<feature type="binding site" evidence="1">
    <location>
        <position position="177"/>
    </location>
    <ligand>
        <name>L-tyrosine</name>
        <dbReference type="ChEBI" id="CHEBI:58315"/>
    </ligand>
</feature>
<feature type="binding site" evidence="1">
    <location>
        <position position="221"/>
    </location>
    <ligand>
        <name>ATP</name>
        <dbReference type="ChEBI" id="CHEBI:30616"/>
    </ligand>
</feature>
<accession>Q979Z1</accession>
<reference key="1">
    <citation type="journal article" date="2000" name="Proc. Natl. Acad. Sci. U.S.A.">
        <title>Archaeal adaptation to higher temperatures revealed by genomic sequence of Thermoplasma volcanium.</title>
        <authorList>
            <person name="Kawashima T."/>
            <person name="Amano N."/>
            <person name="Koike H."/>
            <person name="Makino S."/>
            <person name="Higuchi S."/>
            <person name="Kawashima-Ohya Y."/>
            <person name="Watanabe K."/>
            <person name="Yamazaki M."/>
            <person name="Kanehori K."/>
            <person name="Kawamoto T."/>
            <person name="Nunoshiba T."/>
            <person name="Yamamoto Y."/>
            <person name="Aramaki H."/>
            <person name="Makino K."/>
            <person name="Suzuki M."/>
        </authorList>
    </citation>
    <scope>NUCLEOTIDE SEQUENCE [LARGE SCALE GENOMIC DNA]</scope>
    <source>
        <strain>ATCC 51530 / DSM 4299 / JCM 9571 / NBRC 15438 / GSS1</strain>
    </source>
</reference>
<organism>
    <name type="scientific">Thermoplasma volcanium (strain ATCC 51530 / DSM 4299 / JCM 9571 / NBRC 15438 / GSS1)</name>
    <dbReference type="NCBI Taxonomy" id="273116"/>
    <lineage>
        <taxon>Archaea</taxon>
        <taxon>Methanobacteriati</taxon>
        <taxon>Thermoplasmatota</taxon>
        <taxon>Thermoplasmata</taxon>
        <taxon>Thermoplasmatales</taxon>
        <taxon>Thermoplasmataceae</taxon>
        <taxon>Thermoplasma</taxon>
    </lineage>
</organism>
<keyword id="KW-0030">Aminoacyl-tRNA synthetase</keyword>
<keyword id="KW-0067">ATP-binding</keyword>
<keyword id="KW-0963">Cytoplasm</keyword>
<keyword id="KW-0436">Ligase</keyword>
<keyword id="KW-0547">Nucleotide-binding</keyword>
<keyword id="KW-0648">Protein biosynthesis</keyword>
<evidence type="ECO:0000255" key="1">
    <source>
        <dbReference type="HAMAP-Rule" id="MF_02009"/>
    </source>
</evidence>
<name>SYY_THEVO</name>
<proteinExistence type="inferred from homology"/>
<comment type="function">
    <text evidence="1">Catalyzes the attachment of tyrosine to tRNA(Tyr) in a two-step reaction: tyrosine is first activated by ATP to form Tyr-AMP and then transferred to the acceptor end of tRNA(Tyr).</text>
</comment>
<comment type="catalytic activity">
    <reaction evidence="1">
        <text>tRNA(Tyr) + L-tyrosine + ATP = L-tyrosyl-tRNA(Tyr) + AMP + diphosphate + H(+)</text>
        <dbReference type="Rhea" id="RHEA:10220"/>
        <dbReference type="Rhea" id="RHEA-COMP:9706"/>
        <dbReference type="Rhea" id="RHEA-COMP:9707"/>
        <dbReference type="ChEBI" id="CHEBI:15378"/>
        <dbReference type="ChEBI" id="CHEBI:30616"/>
        <dbReference type="ChEBI" id="CHEBI:33019"/>
        <dbReference type="ChEBI" id="CHEBI:58315"/>
        <dbReference type="ChEBI" id="CHEBI:78442"/>
        <dbReference type="ChEBI" id="CHEBI:78536"/>
        <dbReference type="ChEBI" id="CHEBI:456215"/>
        <dbReference type="EC" id="6.1.1.1"/>
    </reaction>
</comment>
<comment type="subunit">
    <text evidence="1">Homodimer.</text>
</comment>
<comment type="subcellular location">
    <subcellularLocation>
        <location evidence="1">Cytoplasm</location>
    </subcellularLocation>
</comment>
<comment type="similarity">
    <text evidence="1">Belongs to the class-I aminoacyl-tRNA synthetase family. TyrS type 4 subfamily.</text>
</comment>